<feature type="chain" id="PRO_0000059815" description="Ig kappa chain V-VI region NQ2-17.4.1">
    <location>
        <begin position="1"/>
        <end position="107" status="greater than"/>
    </location>
</feature>
<feature type="region of interest" description="Framework-1">
    <location>
        <begin position="1"/>
        <end position="23"/>
    </location>
</feature>
<feature type="region of interest" description="Complementarity-determining-1">
    <location>
        <begin position="24"/>
        <end position="33"/>
    </location>
</feature>
<feature type="region of interest" description="Framework-2">
    <location>
        <begin position="34"/>
        <end position="48"/>
    </location>
</feature>
<feature type="region of interest" description="Complementarity-determining-2">
    <location>
        <begin position="49"/>
        <end position="55"/>
    </location>
</feature>
<feature type="region of interest" description="Framework-3">
    <location>
        <begin position="56"/>
        <end position="87"/>
    </location>
</feature>
<feature type="region of interest" description="Complementarity-determining-3">
    <location>
        <begin position="88"/>
        <end position="96"/>
    </location>
</feature>
<feature type="region of interest" description="Framework-4">
    <location>
        <begin position="97"/>
        <end position="106"/>
    </location>
</feature>
<feature type="disulfide bond" evidence="1">
    <location>
        <begin position="23"/>
        <end position="87"/>
    </location>
</feature>
<feature type="non-terminal residue">
    <location>
        <position position="107"/>
    </location>
</feature>
<organism>
    <name type="scientific">Mus musculus</name>
    <name type="common">Mouse</name>
    <dbReference type="NCBI Taxonomy" id="10090"/>
    <lineage>
        <taxon>Eukaryota</taxon>
        <taxon>Metazoa</taxon>
        <taxon>Chordata</taxon>
        <taxon>Craniata</taxon>
        <taxon>Vertebrata</taxon>
        <taxon>Euteleostomi</taxon>
        <taxon>Mammalia</taxon>
        <taxon>Eutheria</taxon>
        <taxon>Euarchontoglires</taxon>
        <taxon>Glires</taxon>
        <taxon>Rodentia</taxon>
        <taxon>Myomorpha</taxon>
        <taxon>Muroidea</taxon>
        <taxon>Muridae</taxon>
        <taxon>Murinae</taxon>
        <taxon>Mus</taxon>
        <taxon>Mus</taxon>
    </lineage>
</organism>
<accession>P04940</accession>
<evidence type="ECO:0000255" key="1">
    <source>
        <dbReference type="PROSITE-ProRule" id="PRU00114"/>
    </source>
</evidence>
<name>KV6A6_MOUSE</name>
<reference key="1">
    <citation type="journal article" date="1983" name="Nature">
        <title>mRNA sequences define an unusually restricted IgG response to 2-phenyloxazolone and its early diversification.</title>
        <authorList>
            <person name="Kaartinen M."/>
            <person name="Griffiths G.M."/>
            <person name="Markham A.F."/>
            <person name="Milstein C."/>
        </authorList>
    </citation>
    <scope>NUCLEOTIDE SEQUENCE [MRNA]</scope>
</reference>
<protein>
    <recommendedName>
        <fullName>Ig kappa chain V-VI region NQ2-17.4.1</fullName>
    </recommendedName>
</protein>
<comment type="function">
    <text>Anti-2-phenyl oxazolone (PHOX) Antibody.</text>
</comment>
<dbReference type="EMBL" id="K00735">
    <property type="protein sequence ID" value="AAA38680.1"/>
    <property type="molecule type" value="mRNA"/>
</dbReference>
<dbReference type="PIR" id="B49049">
    <property type="entry name" value="B49049"/>
</dbReference>
<dbReference type="PIR" id="PH1084">
    <property type="entry name" value="PH1084"/>
</dbReference>
<dbReference type="SMR" id="P04940"/>
<dbReference type="FunCoup" id="P04940">
    <property type="interactions" value="727"/>
</dbReference>
<dbReference type="STRING" id="10090.ENSMUSP00000100575"/>
<dbReference type="InParanoid" id="P04940"/>
<dbReference type="Proteomes" id="UP000000589">
    <property type="component" value="Unplaced"/>
</dbReference>
<dbReference type="RNAct" id="P04940">
    <property type="molecule type" value="protein"/>
</dbReference>
<dbReference type="GO" id="GO:0019814">
    <property type="term" value="C:immunoglobulin complex"/>
    <property type="evidence" value="ECO:0000318"/>
    <property type="project" value="GO_Central"/>
</dbReference>
<dbReference type="GO" id="GO:0002250">
    <property type="term" value="P:adaptive immune response"/>
    <property type="evidence" value="ECO:0007669"/>
    <property type="project" value="UniProtKB-KW"/>
</dbReference>
<dbReference type="GO" id="GO:0006955">
    <property type="term" value="P:immune response"/>
    <property type="evidence" value="ECO:0000318"/>
    <property type="project" value="GO_Central"/>
</dbReference>
<dbReference type="FunFam" id="2.60.40.10:FF:001317">
    <property type="entry name" value="Immunoglobulin kappa chain variable 4-54"/>
    <property type="match status" value="1"/>
</dbReference>
<dbReference type="Gene3D" id="2.60.40.10">
    <property type="entry name" value="Immunoglobulins"/>
    <property type="match status" value="1"/>
</dbReference>
<dbReference type="InterPro" id="IPR007110">
    <property type="entry name" value="Ig-like_dom"/>
</dbReference>
<dbReference type="InterPro" id="IPR036179">
    <property type="entry name" value="Ig-like_dom_sf"/>
</dbReference>
<dbReference type="InterPro" id="IPR013783">
    <property type="entry name" value="Ig-like_fold"/>
</dbReference>
<dbReference type="InterPro" id="IPR003599">
    <property type="entry name" value="Ig_sub"/>
</dbReference>
<dbReference type="InterPro" id="IPR013106">
    <property type="entry name" value="Ig_V-set"/>
</dbReference>
<dbReference type="InterPro" id="IPR050150">
    <property type="entry name" value="IgV_Light_Chain"/>
</dbReference>
<dbReference type="PANTHER" id="PTHR23267">
    <property type="entry name" value="IMMUNOGLOBULIN LIGHT CHAIN"/>
    <property type="match status" value="1"/>
</dbReference>
<dbReference type="Pfam" id="PF07686">
    <property type="entry name" value="V-set"/>
    <property type="match status" value="1"/>
</dbReference>
<dbReference type="SMART" id="SM00409">
    <property type="entry name" value="IG"/>
    <property type="match status" value="1"/>
</dbReference>
<dbReference type="SMART" id="SM00406">
    <property type="entry name" value="IGv"/>
    <property type="match status" value="1"/>
</dbReference>
<dbReference type="SUPFAM" id="SSF48726">
    <property type="entry name" value="Immunoglobulin"/>
    <property type="match status" value="1"/>
</dbReference>
<dbReference type="PROSITE" id="PS50835">
    <property type="entry name" value="IG_LIKE"/>
    <property type="match status" value="1"/>
</dbReference>
<sequence length="107" mass="11561">QIVLTQSPAIMSASPGQKVTMTCSASSSVSYMHWYQQKSGTSPKRWIYDTSKLASGVPARFSGSGSATSYSLTITSMQAEDAATYYCQQWSSNPLTFGAGTKLELKR</sequence>
<proteinExistence type="evidence at transcript level"/>
<keyword id="KW-1064">Adaptive immunity</keyword>
<keyword id="KW-1015">Disulfide bond</keyword>
<keyword id="KW-0374">Hybridoma</keyword>
<keyword id="KW-0391">Immunity</keyword>
<keyword id="KW-1280">Immunoglobulin</keyword>
<keyword id="KW-1185">Reference proteome</keyword>